<organism>
    <name type="scientific">Coxiella burnetii (strain CbuG_Q212)</name>
    <name type="common">Coxiella burnetii (strain Q212)</name>
    <dbReference type="NCBI Taxonomy" id="434923"/>
    <lineage>
        <taxon>Bacteria</taxon>
        <taxon>Pseudomonadati</taxon>
        <taxon>Pseudomonadota</taxon>
        <taxon>Gammaproteobacteria</taxon>
        <taxon>Legionellales</taxon>
        <taxon>Coxiellaceae</taxon>
        <taxon>Coxiella</taxon>
    </lineage>
</organism>
<accession>B6J1S8</accession>
<evidence type="ECO:0000255" key="1">
    <source>
        <dbReference type="HAMAP-Rule" id="MF_01454"/>
    </source>
</evidence>
<evidence type="ECO:0000255" key="2">
    <source>
        <dbReference type="PROSITE-ProRule" id="PRU01231"/>
    </source>
</evidence>
<evidence type="ECO:0000256" key="3">
    <source>
        <dbReference type="SAM" id="MobiDB-lite"/>
    </source>
</evidence>
<feature type="chain" id="PRO_0000385864" description="GTPase Obg">
    <location>
        <begin position="1"/>
        <end position="339"/>
    </location>
</feature>
<feature type="domain" description="Obg" evidence="2">
    <location>
        <begin position="1"/>
        <end position="159"/>
    </location>
</feature>
<feature type="domain" description="OBG-type G" evidence="1">
    <location>
        <begin position="160"/>
        <end position="333"/>
    </location>
</feature>
<feature type="region of interest" description="Disordered" evidence="3">
    <location>
        <begin position="127"/>
        <end position="147"/>
    </location>
</feature>
<feature type="binding site" evidence="1">
    <location>
        <begin position="166"/>
        <end position="173"/>
    </location>
    <ligand>
        <name>GTP</name>
        <dbReference type="ChEBI" id="CHEBI:37565"/>
    </ligand>
</feature>
<feature type="binding site" evidence="1">
    <location>
        <position position="173"/>
    </location>
    <ligand>
        <name>Mg(2+)</name>
        <dbReference type="ChEBI" id="CHEBI:18420"/>
    </ligand>
</feature>
<feature type="binding site" evidence="1">
    <location>
        <begin position="191"/>
        <end position="195"/>
    </location>
    <ligand>
        <name>GTP</name>
        <dbReference type="ChEBI" id="CHEBI:37565"/>
    </ligand>
</feature>
<feature type="binding site" evidence="1">
    <location>
        <position position="193"/>
    </location>
    <ligand>
        <name>Mg(2+)</name>
        <dbReference type="ChEBI" id="CHEBI:18420"/>
    </ligand>
</feature>
<feature type="binding site" evidence="1">
    <location>
        <begin position="213"/>
        <end position="216"/>
    </location>
    <ligand>
        <name>GTP</name>
        <dbReference type="ChEBI" id="CHEBI:37565"/>
    </ligand>
</feature>
<feature type="binding site" evidence="1">
    <location>
        <begin position="283"/>
        <end position="286"/>
    </location>
    <ligand>
        <name>GTP</name>
        <dbReference type="ChEBI" id="CHEBI:37565"/>
    </ligand>
</feature>
<feature type="binding site" evidence="1">
    <location>
        <begin position="314"/>
        <end position="316"/>
    </location>
    <ligand>
        <name>GTP</name>
        <dbReference type="ChEBI" id="CHEBI:37565"/>
    </ligand>
</feature>
<protein>
    <recommendedName>
        <fullName evidence="1">GTPase Obg</fullName>
        <ecNumber evidence="1">3.6.5.-</ecNumber>
    </recommendedName>
    <alternativeName>
        <fullName evidence="1">GTP-binding protein Obg</fullName>
    </alternativeName>
</protein>
<name>OBG_COXB2</name>
<sequence length="339" mass="37166">MKFVDEAFVRVEAGNGGHGCLSFRREKFIPRGGPDGGDGGDGGSVYFVADKSVNTLVEFRYQRLLRAQNGQPGMGRLRSGKKGEDLIVPVPLGTTVYDKETSELIGDLIEAGDKLCVARGGRHGLGNTHFKSSTNRAPRRTTSGEEGEARELKLELKLLADVGLLGLPNAGKSTFIHAVSKATPKIADYPFTTLYPHLGVVRVEEYRSFVIADIPGLIEGASEGAGLGVQFLKHLERTQLLLHIVDIAPLDGSDPVQSIQAIISELEQFSQNLSQKPRWLVFNKIDLLPPDVAQARCQEIINRLNWKGPVYKISAIKRQGTELLCYDLMSFLETNQRSI</sequence>
<gene>
    <name evidence="1" type="primary">obg</name>
    <name type="ordered locus">CbuG_1620</name>
</gene>
<comment type="function">
    <text evidence="1">An essential GTPase which binds GTP, GDP and possibly (p)ppGpp with moderate affinity, with high nucleotide exchange rates and a fairly low GTP hydrolysis rate. Plays a role in control of the cell cycle, stress response, ribosome biogenesis and in those bacteria that undergo differentiation, in morphogenesis control.</text>
</comment>
<comment type="cofactor">
    <cofactor evidence="1">
        <name>Mg(2+)</name>
        <dbReference type="ChEBI" id="CHEBI:18420"/>
    </cofactor>
</comment>
<comment type="subunit">
    <text evidence="1">Monomer.</text>
</comment>
<comment type="subcellular location">
    <subcellularLocation>
        <location evidence="1">Cytoplasm</location>
    </subcellularLocation>
</comment>
<comment type="similarity">
    <text evidence="1">Belongs to the TRAFAC class OBG-HflX-like GTPase superfamily. OBG GTPase family.</text>
</comment>
<reference key="1">
    <citation type="journal article" date="2009" name="Infect. Immun.">
        <title>Comparative genomics reveal extensive transposon-mediated genomic plasticity and diversity among potential effector proteins within the genus Coxiella.</title>
        <authorList>
            <person name="Beare P.A."/>
            <person name="Unsworth N."/>
            <person name="Andoh M."/>
            <person name="Voth D.E."/>
            <person name="Omsland A."/>
            <person name="Gilk S.D."/>
            <person name="Williams K.P."/>
            <person name="Sobral B.W."/>
            <person name="Kupko J.J. III"/>
            <person name="Porcella S.F."/>
            <person name="Samuel J.E."/>
            <person name="Heinzen R.A."/>
        </authorList>
    </citation>
    <scope>NUCLEOTIDE SEQUENCE [LARGE SCALE GENOMIC DNA]</scope>
    <source>
        <strain>CbuG_Q212</strain>
    </source>
</reference>
<dbReference type="EC" id="3.6.5.-" evidence="1"/>
<dbReference type="EMBL" id="CP001019">
    <property type="protein sequence ID" value="ACJ18906.1"/>
    <property type="molecule type" value="Genomic_DNA"/>
</dbReference>
<dbReference type="RefSeq" id="WP_010957543.1">
    <property type="nucleotide sequence ID" value="NC_011527.1"/>
</dbReference>
<dbReference type="SMR" id="B6J1S8"/>
<dbReference type="KEGG" id="cbg:CbuG_1620"/>
<dbReference type="HOGENOM" id="CLU_011747_2_0_6"/>
<dbReference type="GO" id="GO:0005737">
    <property type="term" value="C:cytoplasm"/>
    <property type="evidence" value="ECO:0007669"/>
    <property type="project" value="UniProtKB-SubCell"/>
</dbReference>
<dbReference type="GO" id="GO:0005525">
    <property type="term" value="F:GTP binding"/>
    <property type="evidence" value="ECO:0007669"/>
    <property type="project" value="UniProtKB-UniRule"/>
</dbReference>
<dbReference type="GO" id="GO:0003924">
    <property type="term" value="F:GTPase activity"/>
    <property type="evidence" value="ECO:0007669"/>
    <property type="project" value="UniProtKB-UniRule"/>
</dbReference>
<dbReference type="GO" id="GO:0000287">
    <property type="term" value="F:magnesium ion binding"/>
    <property type="evidence" value="ECO:0007669"/>
    <property type="project" value="InterPro"/>
</dbReference>
<dbReference type="GO" id="GO:0042254">
    <property type="term" value="P:ribosome biogenesis"/>
    <property type="evidence" value="ECO:0007669"/>
    <property type="project" value="UniProtKB-UniRule"/>
</dbReference>
<dbReference type="CDD" id="cd01898">
    <property type="entry name" value="Obg"/>
    <property type="match status" value="1"/>
</dbReference>
<dbReference type="FunFam" id="2.70.210.12:FF:000001">
    <property type="entry name" value="GTPase Obg"/>
    <property type="match status" value="1"/>
</dbReference>
<dbReference type="Gene3D" id="2.70.210.12">
    <property type="entry name" value="GTP1/OBG domain"/>
    <property type="match status" value="1"/>
</dbReference>
<dbReference type="Gene3D" id="3.40.50.300">
    <property type="entry name" value="P-loop containing nucleotide triphosphate hydrolases"/>
    <property type="match status" value="1"/>
</dbReference>
<dbReference type="HAMAP" id="MF_01454">
    <property type="entry name" value="GTPase_Obg"/>
    <property type="match status" value="1"/>
</dbReference>
<dbReference type="InterPro" id="IPR031167">
    <property type="entry name" value="G_OBG"/>
</dbReference>
<dbReference type="InterPro" id="IPR006073">
    <property type="entry name" value="GTP-bd"/>
</dbReference>
<dbReference type="InterPro" id="IPR014100">
    <property type="entry name" value="GTP-bd_Obg/CgtA"/>
</dbReference>
<dbReference type="InterPro" id="IPR006074">
    <property type="entry name" value="GTP1-OBG_CS"/>
</dbReference>
<dbReference type="InterPro" id="IPR006169">
    <property type="entry name" value="GTP1_OBG_dom"/>
</dbReference>
<dbReference type="InterPro" id="IPR036726">
    <property type="entry name" value="GTP1_OBG_dom_sf"/>
</dbReference>
<dbReference type="InterPro" id="IPR045086">
    <property type="entry name" value="OBG_GTPase"/>
</dbReference>
<dbReference type="InterPro" id="IPR027417">
    <property type="entry name" value="P-loop_NTPase"/>
</dbReference>
<dbReference type="NCBIfam" id="TIGR02729">
    <property type="entry name" value="Obg_CgtA"/>
    <property type="match status" value="1"/>
</dbReference>
<dbReference type="NCBIfam" id="NF008955">
    <property type="entry name" value="PRK12297.1"/>
    <property type="match status" value="1"/>
</dbReference>
<dbReference type="NCBIfam" id="NF008956">
    <property type="entry name" value="PRK12299.1"/>
    <property type="match status" value="1"/>
</dbReference>
<dbReference type="PANTHER" id="PTHR11702">
    <property type="entry name" value="DEVELOPMENTALLY REGULATED GTP-BINDING PROTEIN-RELATED"/>
    <property type="match status" value="1"/>
</dbReference>
<dbReference type="PANTHER" id="PTHR11702:SF31">
    <property type="entry name" value="MITOCHONDRIAL RIBOSOME-ASSOCIATED GTPASE 2"/>
    <property type="match status" value="1"/>
</dbReference>
<dbReference type="Pfam" id="PF01018">
    <property type="entry name" value="GTP1_OBG"/>
    <property type="match status" value="1"/>
</dbReference>
<dbReference type="Pfam" id="PF01926">
    <property type="entry name" value="MMR_HSR1"/>
    <property type="match status" value="1"/>
</dbReference>
<dbReference type="PIRSF" id="PIRSF002401">
    <property type="entry name" value="GTP_bd_Obg/CgtA"/>
    <property type="match status" value="1"/>
</dbReference>
<dbReference type="PRINTS" id="PR00326">
    <property type="entry name" value="GTP1OBG"/>
</dbReference>
<dbReference type="SUPFAM" id="SSF82051">
    <property type="entry name" value="Obg GTP-binding protein N-terminal domain"/>
    <property type="match status" value="1"/>
</dbReference>
<dbReference type="SUPFAM" id="SSF52540">
    <property type="entry name" value="P-loop containing nucleoside triphosphate hydrolases"/>
    <property type="match status" value="1"/>
</dbReference>
<dbReference type="PROSITE" id="PS51710">
    <property type="entry name" value="G_OBG"/>
    <property type="match status" value="1"/>
</dbReference>
<dbReference type="PROSITE" id="PS00905">
    <property type="entry name" value="GTP1_OBG"/>
    <property type="match status" value="1"/>
</dbReference>
<dbReference type="PROSITE" id="PS51883">
    <property type="entry name" value="OBG"/>
    <property type="match status" value="1"/>
</dbReference>
<proteinExistence type="inferred from homology"/>
<keyword id="KW-0963">Cytoplasm</keyword>
<keyword id="KW-0342">GTP-binding</keyword>
<keyword id="KW-0378">Hydrolase</keyword>
<keyword id="KW-0460">Magnesium</keyword>
<keyword id="KW-0479">Metal-binding</keyword>
<keyword id="KW-0547">Nucleotide-binding</keyword>